<gene>
    <name type="ordered locus">Rv2008c</name>
    <name type="ORF">MTCY39.09</name>
</gene>
<dbReference type="EMBL" id="AL123456">
    <property type="protein sequence ID" value="CCP44780.1"/>
    <property type="molecule type" value="Genomic_DNA"/>
</dbReference>
<dbReference type="PIR" id="F70759">
    <property type="entry name" value="F70759"/>
</dbReference>
<dbReference type="RefSeq" id="NP_216524.1">
    <property type="nucleotide sequence ID" value="NC_000962.3"/>
</dbReference>
<dbReference type="RefSeq" id="WP_003410070.1">
    <property type="nucleotide sequence ID" value="NC_000962.3"/>
</dbReference>
<dbReference type="STRING" id="83332.Rv2008c"/>
<dbReference type="PaxDb" id="83332-Rv2008c"/>
<dbReference type="DNASU" id="888813"/>
<dbReference type="GeneID" id="888813"/>
<dbReference type="KEGG" id="mtu:Rv2008c"/>
<dbReference type="KEGG" id="mtv:RVBD_2008c"/>
<dbReference type="TubercuList" id="Rv2008c"/>
<dbReference type="eggNOG" id="COG1373">
    <property type="taxonomic scope" value="Bacteria"/>
</dbReference>
<dbReference type="eggNOG" id="COG4108">
    <property type="taxonomic scope" value="Bacteria"/>
</dbReference>
<dbReference type="InParanoid" id="P9WLM9"/>
<dbReference type="OrthoDB" id="128089at2"/>
<dbReference type="PhylomeDB" id="P9WLM9"/>
<dbReference type="Proteomes" id="UP000001584">
    <property type="component" value="Chromosome"/>
</dbReference>
<dbReference type="GO" id="GO:0005524">
    <property type="term" value="F:ATP binding"/>
    <property type="evidence" value="ECO:0007669"/>
    <property type="project" value="UniProtKB-KW"/>
</dbReference>
<dbReference type="Gene3D" id="3.40.50.300">
    <property type="entry name" value="P-loop containing nucleotide triphosphate hydrolases"/>
    <property type="match status" value="1"/>
</dbReference>
<dbReference type="InterPro" id="IPR041682">
    <property type="entry name" value="AAA_14"/>
</dbReference>
<dbReference type="InterPro" id="IPR025420">
    <property type="entry name" value="DUF4143"/>
</dbReference>
<dbReference type="InterPro" id="IPR027417">
    <property type="entry name" value="P-loop_NTPase"/>
</dbReference>
<dbReference type="PANTHER" id="PTHR43566">
    <property type="entry name" value="CONSERVED PROTEIN"/>
    <property type="match status" value="1"/>
</dbReference>
<dbReference type="PANTHER" id="PTHR43566:SF2">
    <property type="entry name" value="DUF4143 DOMAIN-CONTAINING PROTEIN"/>
    <property type="match status" value="1"/>
</dbReference>
<dbReference type="Pfam" id="PF13173">
    <property type="entry name" value="AAA_14"/>
    <property type="match status" value="1"/>
</dbReference>
<dbReference type="Pfam" id="PF13635">
    <property type="entry name" value="DUF4143"/>
    <property type="match status" value="1"/>
</dbReference>
<dbReference type="SUPFAM" id="SSF52540">
    <property type="entry name" value="P-loop containing nucleoside triphosphate hydrolases"/>
    <property type="match status" value="1"/>
</dbReference>
<reference key="1">
    <citation type="journal article" date="1998" name="Nature">
        <title>Deciphering the biology of Mycobacterium tuberculosis from the complete genome sequence.</title>
        <authorList>
            <person name="Cole S.T."/>
            <person name="Brosch R."/>
            <person name="Parkhill J."/>
            <person name="Garnier T."/>
            <person name="Churcher C.M."/>
            <person name="Harris D.E."/>
            <person name="Gordon S.V."/>
            <person name="Eiglmeier K."/>
            <person name="Gas S."/>
            <person name="Barry C.E. III"/>
            <person name="Tekaia F."/>
            <person name="Badcock K."/>
            <person name="Basham D."/>
            <person name="Brown D."/>
            <person name="Chillingworth T."/>
            <person name="Connor R."/>
            <person name="Davies R.M."/>
            <person name="Devlin K."/>
            <person name="Feltwell T."/>
            <person name="Gentles S."/>
            <person name="Hamlin N."/>
            <person name="Holroyd S."/>
            <person name="Hornsby T."/>
            <person name="Jagels K."/>
            <person name="Krogh A."/>
            <person name="McLean J."/>
            <person name="Moule S."/>
            <person name="Murphy L.D."/>
            <person name="Oliver S."/>
            <person name="Osborne J."/>
            <person name="Quail M.A."/>
            <person name="Rajandream M.A."/>
            <person name="Rogers J."/>
            <person name="Rutter S."/>
            <person name="Seeger K."/>
            <person name="Skelton S."/>
            <person name="Squares S."/>
            <person name="Squares R."/>
            <person name="Sulston J.E."/>
            <person name="Taylor K."/>
            <person name="Whitehead S."/>
            <person name="Barrell B.G."/>
        </authorList>
    </citation>
    <scope>NUCLEOTIDE SEQUENCE [LARGE SCALE GENOMIC DNA]</scope>
    <source>
        <strain>ATCC 25618 / H37Rv</strain>
    </source>
</reference>
<reference key="2">
    <citation type="journal article" date="2011" name="Mol. Cell. Proteomics">
        <title>Proteogenomic analysis of Mycobacterium tuberculosis by high resolution mass spectrometry.</title>
        <authorList>
            <person name="Kelkar D.S."/>
            <person name="Kumar D."/>
            <person name="Kumar P."/>
            <person name="Balakrishnan L."/>
            <person name="Muthusamy B."/>
            <person name="Yadav A.K."/>
            <person name="Shrivastava P."/>
            <person name="Marimuthu A."/>
            <person name="Anand S."/>
            <person name="Sundaram H."/>
            <person name="Kingsbury R."/>
            <person name="Harsha H.C."/>
            <person name="Nair B."/>
            <person name="Prasad T.S."/>
            <person name="Chauhan D.S."/>
            <person name="Katoch K."/>
            <person name="Katoch V.M."/>
            <person name="Kumar P."/>
            <person name="Chaerkady R."/>
            <person name="Ramachandran S."/>
            <person name="Dash D."/>
            <person name="Pandey A."/>
        </authorList>
    </citation>
    <scope>IDENTIFICATION BY MASS SPECTROMETRY [LARGE SCALE ANALYSIS]</scope>
    <source>
        <strain>ATCC 25618 / H37Rv</strain>
    </source>
</reference>
<protein>
    <recommendedName>
        <fullName>Uncharacterized protein Rv2008c</fullName>
    </recommendedName>
</protein>
<name>Y2008_MYCTU</name>
<feature type="chain" id="PRO_0000103936" description="Uncharacterized protein Rv2008c">
    <location>
        <begin position="1"/>
        <end position="441"/>
    </location>
</feature>
<feature type="binding site" evidence="1">
    <location>
        <begin position="78"/>
        <end position="85"/>
    </location>
    <ligand>
        <name>ATP</name>
        <dbReference type="ChEBI" id="CHEBI:30616"/>
    </ligand>
</feature>
<proteinExistence type="evidence at protein level"/>
<sequence>MDEIESLIGLRPTPLTWPVVIAGDFLGVWDPPPSLPGAANHEISAPTARISCMLIERRDAAARLRRALHRAPVVLLTGPRQAGKTTLSRLVGKSAPECTFDAENPVDATRLADPMLALSGLSGLITIDEAQRIPDLFPVLRVLVDRPVMPARFLILGSASPDLVGLASESLAGRVELVELSGLTVRDVGSSAADRLWLRGGLPPSFTARSNEDSAAWRDGYITTFLERDLAQLGVRIPAATMRRAWTMLAHYHGQLFSGAELARSLDVAQTTARRYLDALTDALVVRQLTPWFANIGKRQRRSPKIYIRDTGLLHRLLGIDDRLALERNPKLGASWEGFVLEQLAALLAPNPLYYWRTQQDAELDLYVELSGRPYGFEIKRTSTPSISRSMRSALVDLQLARLAIVYPGEHRFPLSDTVVAVPADQILTTGSVDELLALLK</sequence>
<evidence type="ECO:0000255" key="1"/>
<accession>P9WLM9</accession>
<accession>L0TB31</accession>
<accession>P64923</accession>
<accession>Q10849</accession>
<keyword id="KW-0067">ATP-binding</keyword>
<keyword id="KW-0547">Nucleotide-binding</keyword>
<keyword id="KW-1185">Reference proteome</keyword>
<organism>
    <name type="scientific">Mycobacterium tuberculosis (strain ATCC 25618 / H37Rv)</name>
    <dbReference type="NCBI Taxonomy" id="83332"/>
    <lineage>
        <taxon>Bacteria</taxon>
        <taxon>Bacillati</taxon>
        <taxon>Actinomycetota</taxon>
        <taxon>Actinomycetes</taxon>
        <taxon>Mycobacteriales</taxon>
        <taxon>Mycobacteriaceae</taxon>
        <taxon>Mycobacterium</taxon>
        <taxon>Mycobacterium tuberculosis complex</taxon>
    </lineage>
</organism>